<proteinExistence type="inferred from homology"/>
<evidence type="ECO:0000255" key="1">
    <source>
        <dbReference type="HAMAP-Rule" id="MF_00141"/>
    </source>
</evidence>
<organism>
    <name type="scientific">Clostridium botulinum (strain Langeland / NCTC 10281 / Type F)</name>
    <dbReference type="NCBI Taxonomy" id="441772"/>
    <lineage>
        <taxon>Bacteria</taxon>
        <taxon>Bacillati</taxon>
        <taxon>Bacillota</taxon>
        <taxon>Clostridia</taxon>
        <taxon>Eubacteriales</taxon>
        <taxon>Clostridiaceae</taxon>
        <taxon>Clostridium</taxon>
    </lineage>
</organism>
<reference key="1">
    <citation type="submission" date="2007-06" db="EMBL/GenBank/DDBJ databases">
        <authorList>
            <person name="Brinkac L.M."/>
            <person name="Daugherty S."/>
            <person name="Dodson R.J."/>
            <person name="Madupu R."/>
            <person name="Brown J.L."/>
            <person name="Bruce D."/>
            <person name="Detter C."/>
            <person name="Munk C."/>
            <person name="Smith L.A."/>
            <person name="Smith T.J."/>
            <person name="White O."/>
            <person name="Brettin T.S."/>
        </authorList>
    </citation>
    <scope>NUCLEOTIDE SEQUENCE [LARGE SCALE GENOMIC DNA]</scope>
    <source>
        <strain>Langeland / NCTC 10281 / Type F</strain>
    </source>
</reference>
<accession>A7GEK9</accession>
<sequence>MISAGDLRKGTTFEQDGQVYVVVEFLHVKPGKGAAFVRTKLKNAITGAVTETTFNPTAKLQEAVIERKEMQYLYTDGELYYFMDQETFEQIPLNYDKVEEAIKFLKENMFATIKFFKGEAFSVEAPNFVELLISHTEPGAKGNTTSNVMKPATLETGATIQVPLFVNEGETIRVDTRTGEYMERV</sequence>
<feature type="chain" id="PRO_1000010719" description="Elongation factor P">
    <location>
        <begin position="1"/>
        <end position="185"/>
    </location>
</feature>
<dbReference type="EMBL" id="CP000728">
    <property type="protein sequence ID" value="ABS39682.1"/>
    <property type="molecule type" value="Genomic_DNA"/>
</dbReference>
<dbReference type="RefSeq" id="WP_003358905.1">
    <property type="nucleotide sequence ID" value="NC_009699.1"/>
</dbReference>
<dbReference type="SMR" id="A7GEK9"/>
<dbReference type="GeneID" id="5186152"/>
<dbReference type="KEGG" id="cbf:CLI_1961"/>
<dbReference type="HOGENOM" id="CLU_074944_0_1_9"/>
<dbReference type="UniPathway" id="UPA00345"/>
<dbReference type="Proteomes" id="UP000002410">
    <property type="component" value="Chromosome"/>
</dbReference>
<dbReference type="GO" id="GO:0005737">
    <property type="term" value="C:cytoplasm"/>
    <property type="evidence" value="ECO:0007669"/>
    <property type="project" value="UniProtKB-SubCell"/>
</dbReference>
<dbReference type="GO" id="GO:0003746">
    <property type="term" value="F:translation elongation factor activity"/>
    <property type="evidence" value="ECO:0007669"/>
    <property type="project" value="UniProtKB-UniRule"/>
</dbReference>
<dbReference type="GO" id="GO:0043043">
    <property type="term" value="P:peptide biosynthetic process"/>
    <property type="evidence" value="ECO:0007669"/>
    <property type="project" value="InterPro"/>
</dbReference>
<dbReference type="CDD" id="cd04470">
    <property type="entry name" value="S1_EF-P_repeat_1"/>
    <property type="match status" value="1"/>
</dbReference>
<dbReference type="CDD" id="cd05794">
    <property type="entry name" value="S1_EF-P_repeat_2"/>
    <property type="match status" value="1"/>
</dbReference>
<dbReference type="FunFam" id="2.30.30.30:FF:000003">
    <property type="entry name" value="Elongation factor P"/>
    <property type="match status" value="1"/>
</dbReference>
<dbReference type="FunFam" id="2.40.50.140:FF:000004">
    <property type="entry name" value="Elongation factor P"/>
    <property type="match status" value="1"/>
</dbReference>
<dbReference type="FunFam" id="2.40.50.140:FF:000009">
    <property type="entry name" value="Elongation factor P"/>
    <property type="match status" value="1"/>
</dbReference>
<dbReference type="Gene3D" id="2.30.30.30">
    <property type="match status" value="1"/>
</dbReference>
<dbReference type="Gene3D" id="2.40.50.140">
    <property type="entry name" value="Nucleic acid-binding proteins"/>
    <property type="match status" value="2"/>
</dbReference>
<dbReference type="HAMAP" id="MF_00141">
    <property type="entry name" value="EF_P"/>
    <property type="match status" value="1"/>
</dbReference>
<dbReference type="InterPro" id="IPR015365">
    <property type="entry name" value="Elong-fact-P_C"/>
</dbReference>
<dbReference type="InterPro" id="IPR012340">
    <property type="entry name" value="NA-bd_OB-fold"/>
</dbReference>
<dbReference type="InterPro" id="IPR014722">
    <property type="entry name" value="Rib_uL2_dom2"/>
</dbReference>
<dbReference type="InterPro" id="IPR020599">
    <property type="entry name" value="Transl_elong_fac_P/YeiP"/>
</dbReference>
<dbReference type="InterPro" id="IPR013185">
    <property type="entry name" value="Transl_elong_KOW-like"/>
</dbReference>
<dbReference type="InterPro" id="IPR001059">
    <property type="entry name" value="Transl_elong_P/YeiP_cen"/>
</dbReference>
<dbReference type="InterPro" id="IPR013852">
    <property type="entry name" value="Transl_elong_P/YeiP_CS"/>
</dbReference>
<dbReference type="InterPro" id="IPR011768">
    <property type="entry name" value="Transl_elongation_fac_P"/>
</dbReference>
<dbReference type="InterPro" id="IPR008991">
    <property type="entry name" value="Translation_prot_SH3-like_sf"/>
</dbReference>
<dbReference type="NCBIfam" id="TIGR00038">
    <property type="entry name" value="efp"/>
    <property type="match status" value="1"/>
</dbReference>
<dbReference type="NCBIfam" id="NF001810">
    <property type="entry name" value="PRK00529.1"/>
    <property type="match status" value="1"/>
</dbReference>
<dbReference type="PANTHER" id="PTHR30053">
    <property type="entry name" value="ELONGATION FACTOR P"/>
    <property type="match status" value="1"/>
</dbReference>
<dbReference type="PANTHER" id="PTHR30053:SF12">
    <property type="entry name" value="ELONGATION FACTOR P (EF-P) FAMILY PROTEIN"/>
    <property type="match status" value="1"/>
</dbReference>
<dbReference type="Pfam" id="PF01132">
    <property type="entry name" value="EFP"/>
    <property type="match status" value="1"/>
</dbReference>
<dbReference type="Pfam" id="PF08207">
    <property type="entry name" value="EFP_N"/>
    <property type="match status" value="1"/>
</dbReference>
<dbReference type="Pfam" id="PF09285">
    <property type="entry name" value="Elong-fact-P_C"/>
    <property type="match status" value="1"/>
</dbReference>
<dbReference type="PIRSF" id="PIRSF005901">
    <property type="entry name" value="EF-P"/>
    <property type="match status" value="1"/>
</dbReference>
<dbReference type="SMART" id="SM01185">
    <property type="entry name" value="EFP"/>
    <property type="match status" value="1"/>
</dbReference>
<dbReference type="SMART" id="SM00841">
    <property type="entry name" value="Elong-fact-P_C"/>
    <property type="match status" value="1"/>
</dbReference>
<dbReference type="SUPFAM" id="SSF50249">
    <property type="entry name" value="Nucleic acid-binding proteins"/>
    <property type="match status" value="2"/>
</dbReference>
<dbReference type="SUPFAM" id="SSF50104">
    <property type="entry name" value="Translation proteins SH3-like domain"/>
    <property type="match status" value="1"/>
</dbReference>
<dbReference type="PROSITE" id="PS01275">
    <property type="entry name" value="EFP"/>
    <property type="match status" value="1"/>
</dbReference>
<gene>
    <name evidence="1" type="primary">efp</name>
    <name type="ordered locus">CLI_1961</name>
</gene>
<protein>
    <recommendedName>
        <fullName evidence="1">Elongation factor P</fullName>
        <shortName evidence="1">EF-P</shortName>
    </recommendedName>
</protein>
<keyword id="KW-0963">Cytoplasm</keyword>
<keyword id="KW-0251">Elongation factor</keyword>
<keyword id="KW-0648">Protein biosynthesis</keyword>
<name>EFP_CLOBL</name>
<comment type="function">
    <text evidence="1">Involved in peptide bond synthesis. Stimulates efficient translation and peptide-bond synthesis on native or reconstituted 70S ribosomes in vitro. Probably functions indirectly by altering the affinity of the ribosome for aminoacyl-tRNA, thus increasing their reactivity as acceptors for peptidyl transferase.</text>
</comment>
<comment type="pathway">
    <text evidence="1">Protein biosynthesis; polypeptide chain elongation.</text>
</comment>
<comment type="subcellular location">
    <subcellularLocation>
        <location evidence="1">Cytoplasm</location>
    </subcellularLocation>
</comment>
<comment type="similarity">
    <text evidence="1">Belongs to the elongation factor P family.</text>
</comment>